<feature type="chain" id="PRO_0000084372" description="Low calcium response locus protein G">
    <location>
        <begin position="1"/>
        <end position="95"/>
    </location>
</feature>
<feature type="region of interest" description="Disordered" evidence="1">
    <location>
        <begin position="65"/>
        <end position="95"/>
    </location>
</feature>
<feature type="compositionally biased region" description="Basic and acidic residues" evidence="1">
    <location>
        <begin position="65"/>
        <end position="82"/>
    </location>
</feature>
<evidence type="ECO:0000256" key="1">
    <source>
        <dbReference type="SAM" id="MobiDB-lite"/>
    </source>
</evidence>
<gene>
    <name type="primary">lcrG</name>
    <name type="ordered locus">pYV0058</name>
</gene>
<accession>P69958</accession>
<accession>P19394</accession>
<accession>Q663K8</accession>
<name>LCRG_YERPS</name>
<protein>
    <recommendedName>
        <fullName>Low calcium response locus protein G</fullName>
    </recommendedName>
</protein>
<keyword id="KW-0614">Plasmid</keyword>
<sequence>MKSSHFDEYDKTLKQAELAIADSDHRAKLLQEMCADIGLTPEAVMKIFAGRSAEEIKPAERELLDEIKRQRERQPQHPYDGKRPRKPTMMRGQII</sequence>
<proteinExistence type="predicted"/>
<organism>
    <name type="scientific">Yersinia pseudotuberculosis serotype I (strain IP32953)</name>
    <dbReference type="NCBI Taxonomy" id="273123"/>
    <lineage>
        <taxon>Bacteria</taxon>
        <taxon>Pseudomonadati</taxon>
        <taxon>Pseudomonadota</taxon>
        <taxon>Gammaproteobacteria</taxon>
        <taxon>Enterobacterales</taxon>
        <taxon>Yersiniaceae</taxon>
        <taxon>Yersinia</taxon>
    </lineage>
</organism>
<reference key="1">
    <citation type="journal article" date="1991" name="J. Bacteriol.">
        <title>Analysis of the V antigen lcrGVH-yopBD operon of Yersinia pseudotuberculosis: evidence for a regulatory role of LcrH and LcrV.</title>
        <authorList>
            <person name="Bergman T."/>
            <person name="Haakansson S."/>
            <person name="Forsberg A."/>
            <person name="Norlander L."/>
            <person name="Macellaro A."/>
            <person name="Baeckman A."/>
            <person name="Boelin I."/>
            <person name="Wolf-Watz H."/>
        </authorList>
    </citation>
    <scope>NUCLEOTIDE SEQUENCE [GENOMIC DNA]</scope>
    <source>
        <strain>YPIII / Serotype O:3</strain>
        <plasmid>pIB1</plasmid>
    </source>
</reference>
<reference key="2">
    <citation type="journal article" date="2004" name="Proc. Natl. Acad. Sci. U.S.A.">
        <title>Insights into the evolution of Yersinia pestis through whole-genome comparison with Yersinia pseudotuberculosis.</title>
        <authorList>
            <person name="Chain P.S.G."/>
            <person name="Carniel E."/>
            <person name="Larimer F.W."/>
            <person name="Lamerdin J."/>
            <person name="Stoutland P.O."/>
            <person name="Regala W.M."/>
            <person name="Georgescu A.M."/>
            <person name="Vergez L.M."/>
            <person name="Land M.L."/>
            <person name="Motin V.L."/>
            <person name="Brubaker R.R."/>
            <person name="Fowler J."/>
            <person name="Hinnebusch J."/>
            <person name="Marceau M."/>
            <person name="Medigue C."/>
            <person name="Simonet M."/>
            <person name="Chenal-Francisque V."/>
            <person name="Souza B."/>
            <person name="Dacheux D."/>
            <person name="Elliott J.M."/>
            <person name="Derbise A."/>
            <person name="Hauser L.J."/>
            <person name="Garcia E."/>
        </authorList>
    </citation>
    <scope>NUCLEOTIDE SEQUENCE [LARGE SCALE GENOMIC DNA]</scope>
    <source>
        <strain>IP32953</strain>
        <plasmid>pYV</plasmid>
    </source>
</reference>
<dbReference type="EMBL" id="M57893">
    <property type="protein sequence ID" value="AAA27644.1"/>
    <property type="molecule type" value="Genomic_DNA"/>
</dbReference>
<dbReference type="EMBL" id="BX936399">
    <property type="protein sequence ID" value="CAF25401.1"/>
    <property type="molecule type" value="Genomic_DNA"/>
</dbReference>
<dbReference type="PIR" id="A37314">
    <property type="entry name" value="A37314"/>
</dbReference>
<dbReference type="RefSeq" id="WP_002212973.1">
    <property type="nucleotide sequence ID" value="NZ_CP009711.1"/>
</dbReference>
<dbReference type="SMR" id="P69958"/>
<dbReference type="KEGG" id="ypo:BZ17_4275"/>
<dbReference type="KEGG" id="yps:pYV0058"/>
<dbReference type="PATRIC" id="fig|273123.14.peg.4511"/>
<dbReference type="Proteomes" id="UP000001011">
    <property type="component" value="Plasmid pYV"/>
</dbReference>
<dbReference type="InterPro" id="IPR009863">
    <property type="entry name" value="T3SS_LcrG_PcrG"/>
</dbReference>
<dbReference type="NCBIfam" id="TIGR02573">
    <property type="entry name" value="LcrG_PcrG"/>
    <property type="match status" value="1"/>
</dbReference>
<dbReference type="Pfam" id="PF07216">
    <property type="entry name" value="LcrG"/>
    <property type="match status" value="1"/>
</dbReference>
<geneLocation type="plasmid">
    <name>pIB1</name>
</geneLocation>
<geneLocation type="plasmid">
    <name>pYV</name>
</geneLocation>